<proteinExistence type="evidence at protein level"/>
<comment type="function">
    <text evidence="1 2 5 6 7">Bidirectional proton-coupled monocarboxylate transporter. Catalyzes the rapid transport across the plasma membrane of many monocarboxylates such as lactate, pyruvate, acetate and the ketone bodies acetoacetate and beta-hydroxybutyrate, and thus contributes to the maintenance of intracellular pH (By similarity). The transport direction is determined by the proton motive force and the concentration gradient of the substrate monocarboxylate. MCT1 is a major lactate exporter (By similarity). Plays a role in cellular responses to a high-fat diet by modulating the cellular levels of lactate and pyruvate that contribute to the regulation of central metabolic pathways and insulin secretion, with concomitant effects on plasma insulin levels and blood glucose homeostasis (PubMed:22522610, PubMed:24367518). Facilitates the protonated monocarboxylate form of succinate export, that its transient protonation upon muscle cell acidification in exercising muscle and ischemic heart. Functions via alternate outward- and inward-open conformation states. Protonation and deprotonation of 302-Asp is essential for the conformational transition (PubMed:32946811).</text>
</comment>
<comment type="catalytic activity">
    <reaction evidence="2">
        <text>(S)-lactate(in) + H(+)(in) = (S)-lactate(out) + H(+)(out)</text>
        <dbReference type="Rhea" id="RHEA:29415"/>
        <dbReference type="ChEBI" id="CHEBI:15378"/>
        <dbReference type="ChEBI" id="CHEBI:16651"/>
    </reaction>
    <physiologicalReaction direction="left-to-right" evidence="1">
        <dbReference type="Rhea" id="RHEA:29416"/>
    </physiologicalReaction>
    <physiologicalReaction direction="right-to-left" evidence="1">
        <dbReference type="Rhea" id="RHEA:29417"/>
    </physiologicalReaction>
</comment>
<comment type="catalytic activity">
    <reaction evidence="2">
        <text>acetate(out) + H(+)(out) = acetate(in) + H(+)(in)</text>
        <dbReference type="Rhea" id="RHEA:71803"/>
        <dbReference type="ChEBI" id="CHEBI:15378"/>
        <dbReference type="ChEBI" id="CHEBI:30089"/>
    </reaction>
    <physiologicalReaction direction="left-to-right" evidence="2">
        <dbReference type="Rhea" id="RHEA:71804"/>
    </physiologicalReaction>
    <physiologicalReaction direction="right-to-left" evidence="2">
        <dbReference type="Rhea" id="RHEA:71805"/>
    </physiologicalReaction>
</comment>
<comment type="catalytic activity">
    <reaction evidence="2">
        <text>acetoacetate(out) + H(+)(out) = acetoacetate(in) + H(+)(in)</text>
        <dbReference type="Rhea" id="RHEA:71775"/>
        <dbReference type="ChEBI" id="CHEBI:13705"/>
        <dbReference type="ChEBI" id="CHEBI:15378"/>
    </reaction>
    <physiologicalReaction direction="left-to-right" evidence="2">
        <dbReference type="Rhea" id="RHEA:71776"/>
    </physiologicalReaction>
    <physiologicalReaction direction="right-to-left" evidence="2">
        <dbReference type="Rhea" id="RHEA:71777"/>
    </physiologicalReaction>
</comment>
<comment type="catalytic activity">
    <reaction evidence="2">
        <text>pyruvate(out) + H(+)(out) = pyruvate(in) + H(+)(in)</text>
        <dbReference type="Rhea" id="RHEA:64720"/>
        <dbReference type="ChEBI" id="CHEBI:15361"/>
        <dbReference type="ChEBI" id="CHEBI:15378"/>
    </reaction>
</comment>
<comment type="catalytic activity">
    <reaction evidence="2">
        <text>(R)-3-hydroxybutanoate(out) + H(+)(out) = (R)-3-hydroxybutanoate(in) + H(+)(in)</text>
        <dbReference type="Rhea" id="RHEA:71795"/>
        <dbReference type="ChEBI" id="CHEBI:10983"/>
        <dbReference type="ChEBI" id="CHEBI:15378"/>
    </reaction>
    <physiologicalReaction direction="left-to-right" evidence="2">
        <dbReference type="Rhea" id="RHEA:71796"/>
    </physiologicalReaction>
    <physiologicalReaction direction="right-to-left" evidence="2">
        <dbReference type="Rhea" id="RHEA:71797"/>
    </physiologicalReaction>
</comment>
<comment type="catalytic activity">
    <reaction evidence="2">
        <text>3-methyl-2-oxobutanoate(out) + H(+)(out) = 3-methyl-2-oxobutanoate(in) + H(+)(in)</text>
        <dbReference type="Rhea" id="RHEA:71783"/>
        <dbReference type="ChEBI" id="CHEBI:11851"/>
        <dbReference type="ChEBI" id="CHEBI:15378"/>
    </reaction>
</comment>
<comment type="catalytic activity">
    <reaction evidence="1">
        <text>4-methyl-2-oxopentanoate(out) + H(+)(out) = 4-methyl-2-oxopentanoate(in) + H(+)(in)</text>
        <dbReference type="Rhea" id="RHEA:71779"/>
        <dbReference type="ChEBI" id="CHEBI:15378"/>
        <dbReference type="ChEBI" id="CHEBI:17865"/>
    </reaction>
</comment>
<comment type="catalytic activity">
    <reaction evidence="7">
        <text>succinate(in) + 2 H(+)(in) = succinate(out) + 2 H(+)(out)</text>
        <dbReference type="Rhea" id="RHEA:29303"/>
        <dbReference type="ChEBI" id="CHEBI:15378"/>
        <dbReference type="ChEBI" id="CHEBI:30031"/>
    </reaction>
    <physiologicalReaction direction="left-to-right" evidence="7">
        <dbReference type="Rhea" id="RHEA:29304"/>
    </physiologicalReaction>
</comment>
<comment type="subunit">
    <text evidence="2 4">Interacts with isoform 2 of BSG; interaction mediates SLC16A1 targeting to the plasma membrane (PubMed:21792931). Interacts with EMB; interaction mediates SLC16A1 targeting to the plasma membrane (By similarity).</text>
</comment>
<comment type="subcellular location">
    <subcellularLocation>
        <location evidence="4 8">Cell membrane</location>
        <topology evidence="1">Multi-pass membrane protein</topology>
    </subcellularLocation>
    <subcellularLocation>
        <location evidence="2">Basolateral cell membrane</location>
        <topology evidence="1">Multi-pass membrane protein</topology>
    </subcellularLocation>
    <subcellularLocation>
        <location evidence="1">Apical cell membrane</location>
        <topology evidence="1">Multi-pass membrane protein</topology>
    </subcellularLocation>
    <text evidence="1">Expression at the cell surface requires the ancillary proteins BSG and EMB.</text>
</comment>
<comment type="tissue specificity">
    <text evidence="4 5 6 8 9">Detected in liver, brain, spinal cord, spermatozoa, muscle, white adipose tissue and brown adipose tissue (at protein level). Widely expressed, except in pancreas, where expression is not detectable.</text>
</comment>
<comment type="disruption phenotype">
    <text evidence="6">Complete lethality during early embryonic development. Heterozygous mice are viable and show no obvious morphological or behavorial phenotype. Heterozygous mice that are kept on a normal diet show normal weight gain, normal glucose tolerance and insulin sensitivity. In contrast, mice exhibit a striking reduction in weight gain relative to wild-type, when kept on a high-fat diet. This is due to reduced fat accumulation in the liver and in subcutaneous white adipose tissue. In addition, heterozygous mice kept on a high-fat diet show higher glucose tolerance and higher insulin sensitivity than wild-type. The reduced weight gain is explained by reduced food intake, less efficient nutrient assimilation in the intestine and increased oxygen consumption when kept on a high-fat diet. Besides, heterozygous mice fail to respond to a high-fat diet by up-regulation of genes involved in lipid metabolism.</text>
</comment>
<comment type="miscellaneous">
    <text>Overexpression in pancreatic beta-cells triggers insulin secretion in response to pyruvate, causing hyperinsulemia and hypoglycemia during strenuous exercise.</text>
</comment>
<comment type="similarity">
    <text evidence="10">Belongs to the major facilitator superfamily. Monocarboxylate porter (TC 2.A.1.13) family.</text>
</comment>
<reference key="1">
    <citation type="journal article" date="1996" name="Biochim. Biophys. Acta">
        <title>Cloning and sequencing of the monocarboxylate transporter from mouse Ehrlich Lettre tumour cell confirms its identity as MCT1 and demonstrates that glycosylation is not required for MCT1 function.</title>
        <authorList>
            <person name="Carpenter L."/>
            <person name="Poole R.C."/>
            <person name="Halestrap A.P."/>
        </authorList>
    </citation>
    <scope>NUCLEOTIDE SEQUENCE [MRNA]</scope>
    <scope>SUBCELLULAR LOCATION</scope>
    <scope>TISSUE SPECIFICITY</scope>
</reference>
<reference key="2">
    <citation type="journal article" date="1998" name="Am. J. Physiol.">
        <title>Monocarboxylate transporter expression in mouse brain.</title>
        <authorList>
            <person name="Koehler-Stec E.M."/>
            <person name="Simpson I.A."/>
            <person name="Vannucci S.J."/>
            <person name="Landschulz K.T."/>
            <person name="Landschulz W.H."/>
        </authorList>
    </citation>
    <scope>NUCLEOTIDE SEQUENCE [MRNA]</scope>
    <scope>TISSUE SPECIFICITY</scope>
    <source>
        <strain>129</strain>
        <tissue>Kidney</tissue>
    </source>
</reference>
<reference key="3">
    <citation type="journal article" date="2004" name="Genome Res.">
        <title>The status, quality, and expansion of the NIH full-length cDNA project: the Mammalian Gene Collection (MGC).</title>
        <authorList>
            <consortium name="The MGC Project Team"/>
        </authorList>
    </citation>
    <scope>NUCLEOTIDE SEQUENCE [LARGE SCALE MRNA]</scope>
    <source>
        <strain>FVB/N</strain>
        <tissue>Mammary gland</tissue>
    </source>
</reference>
<reference key="4">
    <citation type="journal article" date="2007" name="Mol. Cell. Proteomics">
        <title>Qualitative and quantitative analyses of protein phosphorylation in naive and stimulated mouse synaptosomal preparations.</title>
        <authorList>
            <person name="Munton R.P."/>
            <person name="Tweedie-Cullen R."/>
            <person name="Livingstone-Zatchej M."/>
            <person name="Weinandy F."/>
            <person name="Waidelich M."/>
            <person name="Longo D."/>
            <person name="Gehrig P."/>
            <person name="Potthast F."/>
            <person name="Rutishauser D."/>
            <person name="Gerrits B."/>
            <person name="Panse C."/>
            <person name="Schlapbach R."/>
            <person name="Mansuy I.M."/>
        </authorList>
    </citation>
    <scope>IDENTIFICATION BY MASS SPECTROMETRY [LARGE SCALE ANALYSIS]</scope>
    <source>
        <tissue>Brain cortex</tissue>
    </source>
</reference>
<reference key="5">
    <citation type="journal article" date="2007" name="Mol. Cell. Proteomics">
        <title>Mitochondrial phosphoproteome revealed by an improved IMAC method and MS/MS/MS.</title>
        <authorList>
            <person name="Lee J."/>
            <person name="Xu Y."/>
            <person name="Chen Y."/>
            <person name="Sprung R."/>
            <person name="Kim S.C."/>
            <person name="Xie S."/>
            <person name="Zhao Y."/>
        </authorList>
    </citation>
    <scope>PHOSPHORYLATION [LARGE SCALE ANALYSIS] AT SER-213</scope>
    <scope>IDENTIFICATION BY MASS SPECTROMETRY [LARGE SCALE ANALYSIS]</scope>
    <source>
        <tissue>Liver</tissue>
    </source>
</reference>
<reference key="6">
    <citation type="journal article" date="2007" name="Proc. Natl. Acad. Sci. U.S.A.">
        <title>Large-scale phosphorylation analysis of mouse liver.</title>
        <authorList>
            <person name="Villen J."/>
            <person name="Beausoleil S.A."/>
            <person name="Gerber S.A."/>
            <person name="Gygi S.P."/>
        </authorList>
    </citation>
    <scope>PHOSPHORYLATION [LARGE SCALE ANALYSIS] AT SER-210; THR-224 AND SER-491</scope>
    <scope>IDENTIFICATION BY MASS SPECTROMETRY [LARGE SCALE ANALYSIS]</scope>
    <source>
        <tissue>Liver</tissue>
    </source>
</reference>
<reference key="7">
    <citation type="journal article" date="2008" name="J. Proteome Res.">
        <title>Specific phosphopeptide enrichment with immobilized titanium ion affinity chromatography adsorbent for phosphoproteome analysis.</title>
        <authorList>
            <person name="Zhou H."/>
            <person name="Ye M."/>
            <person name="Dong J."/>
            <person name="Han G."/>
            <person name="Jiang X."/>
            <person name="Wu R."/>
            <person name="Zou H."/>
        </authorList>
    </citation>
    <scope>PHOSPHORYLATION [LARGE SCALE ANALYSIS] AT SER-213</scope>
    <scope>IDENTIFICATION BY MASS SPECTROMETRY [LARGE SCALE ANALYSIS]</scope>
    <source>
        <tissue>Liver</tissue>
    </source>
</reference>
<reference key="8">
    <citation type="journal article" date="2009" name="Immunity">
        <title>The phagosomal proteome in interferon-gamma-activated macrophages.</title>
        <authorList>
            <person name="Trost M."/>
            <person name="English L."/>
            <person name="Lemieux S."/>
            <person name="Courcelles M."/>
            <person name="Desjardins M."/>
            <person name="Thibault P."/>
        </authorList>
    </citation>
    <scope>PHOSPHORYLATION [LARGE SCALE ANALYSIS] AT SER-213; SER-230; SER-461; THR-462; SER-477 AND SER-491</scope>
    <scope>IDENTIFICATION BY MASS SPECTROMETRY [LARGE SCALE ANALYSIS]</scope>
</reference>
<reference key="9">
    <citation type="journal article" date="2009" name="Mol. Cell. Proteomics">
        <title>Large scale localization of protein phosphorylation by use of electron capture dissociation mass spectrometry.</title>
        <authorList>
            <person name="Sweet S.M."/>
            <person name="Bailey C.M."/>
            <person name="Cunningham D.L."/>
            <person name="Heath J.K."/>
            <person name="Cooper H.J."/>
        </authorList>
    </citation>
    <scope>PHOSPHORYLATION [LARGE SCALE ANALYSIS] AT SER-213</scope>
    <scope>IDENTIFICATION BY MASS SPECTROMETRY [LARGE SCALE ANALYSIS]</scope>
    <source>
        <tissue>Embryonic fibroblast</tissue>
    </source>
</reference>
<reference key="10">
    <citation type="journal article" date="2010" name="Cell">
        <title>A tissue-specific atlas of mouse protein phosphorylation and expression.</title>
        <authorList>
            <person name="Huttlin E.L."/>
            <person name="Jedrychowski M.P."/>
            <person name="Elias J.E."/>
            <person name="Goswami T."/>
            <person name="Rad R."/>
            <person name="Beausoleil S.A."/>
            <person name="Villen J."/>
            <person name="Haas W."/>
            <person name="Sowa M.E."/>
            <person name="Gygi S.P."/>
        </authorList>
    </citation>
    <scope>PHOSPHORYLATION [LARGE SCALE ANALYSIS] AT SER-210; SER-213; SER-220; SER-230; SER-477; SER-482; SER-483 AND SER-491</scope>
    <scope>IDENTIFICATION BY MASS SPECTROMETRY [LARGE SCALE ANALYSIS]</scope>
    <source>
        <tissue>Brain</tissue>
        <tissue>Brown adipose tissue</tissue>
        <tissue>Heart</tissue>
        <tissue>Kidney</tissue>
        <tissue>Liver</tissue>
        <tissue>Lung</tissue>
        <tissue>Pancreas</tissue>
        <tissue>Spleen</tissue>
        <tissue>Testis</tissue>
    </source>
</reference>
<reference key="11">
    <citation type="journal article" date="2012" name="Diabetes">
        <title>Overexpression of monocarboxylate transporter-1 (SLC16A1) in mouse pancreatic beta-cells leads to relative hyperinsulinism during exercise.</title>
        <authorList>
            <person name="Pullen T.J."/>
            <person name="Sylow L."/>
            <person name="Sun G."/>
            <person name="Halestrap A.P."/>
            <person name="Richter E.A."/>
            <person name="Rutter G.A."/>
        </authorList>
    </citation>
    <scope>FUNCTION</scope>
    <scope>TISSUE SPECIFICITY</scope>
</reference>
<reference key="12">
    <citation type="journal article" date="2012" name="J. Cell. Physiol.">
        <title>Basigin interacts with both MCT1 and MCT2 in murine spermatozoa.</title>
        <authorList>
            <person name="Mannowetz N."/>
            <person name="Wandernoth P."/>
            <person name="Wennemuth G."/>
        </authorList>
    </citation>
    <scope>INTERACTION WITH BSG</scope>
    <scope>TISSUE SPECIFICITY</scope>
    <scope>SUBCELLULAR LOCATION</scope>
</reference>
<reference key="13">
    <citation type="journal article" date="2013" name="PLoS ONE">
        <title>Resistance to diet-induced obesity and associated metabolic perturbations in haploinsufficient monocarboxylate transporter 1 mice.</title>
        <authorList>
            <person name="Lengacher S."/>
            <person name="Nehiri-Sitayeb T."/>
            <person name="Steiner N."/>
            <person name="Carneiro L."/>
            <person name="Favrod C."/>
            <person name="Preitner F."/>
            <person name="Thorens B."/>
            <person name="Stehle J.C."/>
            <person name="Dix L."/>
            <person name="Pralong F."/>
            <person name="Magistretti P.J."/>
            <person name="Pellerin L."/>
        </authorList>
    </citation>
    <scope>DISRUPTION PHENOTYPE</scope>
    <scope>FUNCTION</scope>
    <scope>TISSUE SPECIFICITY</scope>
</reference>
<reference key="14">
    <citation type="journal article" date="2020" name="Cell">
        <title>pH-gated succinate secretion regulates muscle remodeling in response to exercise.</title>
        <authorList>
            <person name="Reddy A."/>
            <person name="Bozi L.H.M."/>
            <person name="Yaghi O.K."/>
            <person name="Mills E.L."/>
            <person name="Xiao H."/>
            <person name="Nicholson H.E."/>
            <person name="Paschini M."/>
            <person name="Paulo J.A."/>
            <person name="Garrity R."/>
            <person name="Laznik-Bogoslavski D."/>
            <person name="Ferreira J.C.B."/>
            <person name="Carl C.S."/>
            <person name="Sjoeberg K.A."/>
            <person name="Wojtaszewski J.F.P."/>
            <person name="Jeppesen J.F."/>
            <person name="Kiens B."/>
            <person name="Gygi S.P."/>
            <person name="Richter E.A."/>
            <person name="Mathis D."/>
            <person name="Chouchani E.T."/>
        </authorList>
    </citation>
    <scope>FUNCTION</scope>
    <scope>TRANSPORTER ACTIVITY</scope>
</reference>
<gene>
    <name type="primary">Slc16a1</name>
    <name type="synonym">Mct1</name>
</gene>
<name>MOT1_MOUSE</name>
<protein>
    <recommendedName>
        <fullName>Monocarboxylate transporter 1</fullName>
        <shortName>MCT 1</shortName>
    </recommendedName>
    <alternativeName>
        <fullName>Solute carrier family 16 member 1</fullName>
    </alternativeName>
</protein>
<evidence type="ECO:0000250" key="1">
    <source>
        <dbReference type="UniProtKB" id="P53985"/>
    </source>
</evidence>
<evidence type="ECO:0000250" key="2">
    <source>
        <dbReference type="UniProtKB" id="P53987"/>
    </source>
</evidence>
<evidence type="ECO:0000256" key="3">
    <source>
        <dbReference type="SAM" id="MobiDB-lite"/>
    </source>
</evidence>
<evidence type="ECO:0000269" key="4">
    <source>
    </source>
</evidence>
<evidence type="ECO:0000269" key="5">
    <source>
    </source>
</evidence>
<evidence type="ECO:0000269" key="6">
    <source>
    </source>
</evidence>
<evidence type="ECO:0000269" key="7">
    <source>
    </source>
</evidence>
<evidence type="ECO:0000269" key="8">
    <source>
    </source>
</evidence>
<evidence type="ECO:0000269" key="9">
    <source>
    </source>
</evidence>
<evidence type="ECO:0000305" key="10"/>
<evidence type="ECO:0007744" key="11">
    <source>
    </source>
</evidence>
<evidence type="ECO:0007744" key="12">
    <source>
    </source>
</evidence>
<evidence type="ECO:0007744" key="13">
    <source>
    </source>
</evidence>
<evidence type="ECO:0007744" key="14">
    <source>
    </source>
</evidence>
<evidence type="ECO:0007744" key="15">
    <source>
    </source>
</evidence>
<evidence type="ECO:0007744" key="16">
    <source>
    </source>
</evidence>
<accession>P53986</accession>
<keyword id="KW-0002">3D-structure</keyword>
<keyword id="KW-1003">Cell membrane</keyword>
<keyword id="KW-0472">Membrane</keyword>
<keyword id="KW-0597">Phosphoprotein</keyword>
<keyword id="KW-1185">Reference proteome</keyword>
<keyword id="KW-0769">Symport</keyword>
<keyword id="KW-0812">Transmembrane</keyword>
<keyword id="KW-1133">Transmembrane helix</keyword>
<keyword id="KW-0813">Transport</keyword>
<sequence length="493" mass="53267">MPPAIGGPVGYTPPDGGWGWAVLVGAFISIGFSYAFPKSITVFFKEIEVIFSATTSEVSWISSIMLAVMYAGGPISSILVNKYGSRPVMIAGGCLSGCGLIAASFCNTVQELYLCIGVIGGLGLAFNLNPALTMIGKYFYKKRPLANGLAMAGSPVFLSTLAPLNQAFFDIFDWRGSFLILGGLLLNCCVAGSLMRPIGPEQVKLEKLKSKESLQEAGKSDANTDLIGGSPKGEKLSVFQTINKFLDLSLFTHRGFLLYLSGNVVMFFGLFTPLVFLSSYGKSKDFSSEKSAFLLSILAFVDMVARPSMGLAANTKWIRPRIQYFFAASVVANGVCHLLAPLSTTYVGFCVYAGVFGFAFGWLSSVLFETLMDLIGPQRFSSAVGLVTIVECCPVLLGPPLLGRLNDMYGDYKYTYWACGVILIIAGIYLFIGMGINYRLLAKEQKAEEKQKREGKEDEASTDVDEKPKETMKAAQSPQQHSSGDPTEEESPV</sequence>
<dbReference type="EMBL" id="X82438">
    <property type="protein sequence ID" value="CAA57819.1"/>
    <property type="molecule type" value="mRNA"/>
</dbReference>
<dbReference type="EMBL" id="AF058055">
    <property type="protein sequence ID" value="AAC13720.1"/>
    <property type="molecule type" value="mRNA"/>
</dbReference>
<dbReference type="EMBL" id="BC014777">
    <property type="protein sequence ID" value="AAH14777.1"/>
    <property type="molecule type" value="mRNA"/>
</dbReference>
<dbReference type="CCDS" id="CCDS17702.1"/>
<dbReference type="RefSeq" id="NP_033222.1">
    <property type="nucleotide sequence ID" value="NM_009196.4"/>
</dbReference>
<dbReference type="PDB" id="7Y1Q">
    <property type="method" value="EM"/>
    <property type="resolution" value="5.03 A"/>
    <property type="chains" value="A=1-493"/>
</dbReference>
<dbReference type="PDBsum" id="7Y1Q"/>
<dbReference type="EMDB" id="EMD-33570"/>
<dbReference type="SMR" id="P53986"/>
<dbReference type="BioGRID" id="203282">
    <property type="interactions" value="12"/>
</dbReference>
<dbReference type="FunCoup" id="P53986">
    <property type="interactions" value="717"/>
</dbReference>
<dbReference type="IntAct" id="P53986">
    <property type="interactions" value="2"/>
</dbReference>
<dbReference type="MINT" id="P53986"/>
<dbReference type="STRING" id="10090.ENSMUSP00000045216"/>
<dbReference type="GlyGen" id="P53986">
    <property type="glycosylation" value="1 site, 1 O-linked glycan (1 site)"/>
</dbReference>
<dbReference type="iPTMnet" id="P53986"/>
<dbReference type="PhosphoSitePlus" id="P53986"/>
<dbReference type="SwissPalm" id="P53986"/>
<dbReference type="jPOST" id="P53986"/>
<dbReference type="PaxDb" id="10090-ENSMUSP00000045216"/>
<dbReference type="PeptideAtlas" id="P53986"/>
<dbReference type="ProteomicsDB" id="291384"/>
<dbReference type="Pumba" id="P53986"/>
<dbReference type="Antibodypedia" id="4301">
    <property type="antibodies" value="341 antibodies from 37 providers"/>
</dbReference>
<dbReference type="DNASU" id="20501"/>
<dbReference type="Ensembl" id="ENSMUST00000046212.2">
    <property type="protein sequence ID" value="ENSMUSP00000045216.2"/>
    <property type="gene ID" value="ENSMUSG00000032902.2"/>
</dbReference>
<dbReference type="GeneID" id="20501"/>
<dbReference type="KEGG" id="mmu:20501"/>
<dbReference type="UCSC" id="uc008qui.2">
    <property type="organism name" value="mouse"/>
</dbReference>
<dbReference type="AGR" id="MGI:106013"/>
<dbReference type="CTD" id="6566"/>
<dbReference type="MGI" id="MGI:106013">
    <property type="gene designation" value="Slc16a1"/>
</dbReference>
<dbReference type="VEuPathDB" id="HostDB:ENSMUSG00000032902"/>
<dbReference type="eggNOG" id="KOG2504">
    <property type="taxonomic scope" value="Eukaryota"/>
</dbReference>
<dbReference type="GeneTree" id="ENSGT00940000154955"/>
<dbReference type="HOGENOM" id="CLU_001265_59_1_1"/>
<dbReference type="InParanoid" id="P53986"/>
<dbReference type="OMA" id="EWAAFTE"/>
<dbReference type="OrthoDB" id="6499973at2759"/>
<dbReference type="PhylomeDB" id="P53986"/>
<dbReference type="TreeFam" id="TF313792"/>
<dbReference type="Reactome" id="R-MMU-210991">
    <property type="pathway name" value="Basigin interactions"/>
</dbReference>
<dbReference type="Reactome" id="R-MMU-433692">
    <property type="pathway name" value="Proton-coupled monocarboxylate transport"/>
</dbReference>
<dbReference type="Reactome" id="R-MMU-9749641">
    <property type="pathway name" value="Aspirin ADME"/>
</dbReference>
<dbReference type="SABIO-RK" id="P53986"/>
<dbReference type="BioGRID-ORCS" id="20501">
    <property type="hits" value="14 hits in 78 CRISPR screens"/>
</dbReference>
<dbReference type="ChiTaRS" id="Slc16a1">
    <property type="organism name" value="mouse"/>
</dbReference>
<dbReference type="PRO" id="PR:P53986"/>
<dbReference type="Proteomes" id="UP000000589">
    <property type="component" value="Chromosome 3"/>
</dbReference>
<dbReference type="RNAct" id="P53986">
    <property type="molecule type" value="protein"/>
</dbReference>
<dbReference type="Bgee" id="ENSMUSG00000032902">
    <property type="expression patterns" value="Expressed in pigmented layer of retina and 276 other cell types or tissues"/>
</dbReference>
<dbReference type="ExpressionAtlas" id="P53986">
    <property type="expression patterns" value="baseline and differential"/>
</dbReference>
<dbReference type="GO" id="GO:0016324">
    <property type="term" value="C:apical plasma membrane"/>
    <property type="evidence" value="ECO:0000250"/>
    <property type="project" value="UniProtKB"/>
</dbReference>
<dbReference type="GO" id="GO:0016323">
    <property type="term" value="C:basolateral plasma membrane"/>
    <property type="evidence" value="ECO:0007669"/>
    <property type="project" value="UniProtKB-SubCell"/>
</dbReference>
<dbReference type="GO" id="GO:0005813">
    <property type="term" value="C:centrosome"/>
    <property type="evidence" value="ECO:0007669"/>
    <property type="project" value="Ensembl"/>
</dbReference>
<dbReference type="GO" id="GO:0016328">
    <property type="term" value="C:lateral plasma membrane"/>
    <property type="evidence" value="ECO:0007669"/>
    <property type="project" value="Ensembl"/>
</dbReference>
<dbReference type="GO" id="GO:0005739">
    <property type="term" value="C:mitochondrion"/>
    <property type="evidence" value="ECO:0007005"/>
    <property type="project" value="MGI"/>
</dbReference>
<dbReference type="GO" id="GO:0005886">
    <property type="term" value="C:plasma membrane"/>
    <property type="evidence" value="ECO:0000314"/>
    <property type="project" value="UniProtKB"/>
</dbReference>
<dbReference type="GO" id="GO:0045202">
    <property type="term" value="C:synapse"/>
    <property type="evidence" value="ECO:0000314"/>
    <property type="project" value="SynGO"/>
</dbReference>
<dbReference type="GO" id="GO:0042802">
    <property type="term" value="F:identical protein binding"/>
    <property type="evidence" value="ECO:0007669"/>
    <property type="project" value="Ensembl"/>
</dbReference>
<dbReference type="GO" id="GO:0015129">
    <property type="term" value="F:lactate transmembrane transporter activity"/>
    <property type="evidence" value="ECO:0000315"/>
    <property type="project" value="ARUK-UCL"/>
</dbReference>
<dbReference type="GO" id="GO:0015650">
    <property type="term" value="F:lactate:proton symporter activity"/>
    <property type="evidence" value="ECO:0000250"/>
    <property type="project" value="UniProtKB"/>
</dbReference>
<dbReference type="GO" id="GO:0015295">
    <property type="term" value="F:solute:proton symporter activity"/>
    <property type="evidence" value="ECO:0000250"/>
    <property type="project" value="UniProtKB"/>
</dbReference>
<dbReference type="GO" id="GO:0015141">
    <property type="term" value="F:succinate transmembrane transporter activity"/>
    <property type="evidence" value="ECO:0007669"/>
    <property type="project" value="Ensembl"/>
</dbReference>
<dbReference type="GO" id="GO:0051780">
    <property type="term" value="P:behavioral response to nutrient"/>
    <property type="evidence" value="ECO:0000315"/>
    <property type="project" value="UniProtKB"/>
</dbReference>
<dbReference type="GO" id="GO:0007098">
    <property type="term" value="P:centrosome cycle"/>
    <property type="evidence" value="ECO:0007669"/>
    <property type="project" value="Ensembl"/>
</dbReference>
<dbReference type="GO" id="GO:0042593">
    <property type="term" value="P:glucose homeostasis"/>
    <property type="evidence" value="ECO:0000315"/>
    <property type="project" value="UniProtKB"/>
</dbReference>
<dbReference type="GO" id="GO:0006629">
    <property type="term" value="P:lipid metabolic process"/>
    <property type="evidence" value="ECO:0000315"/>
    <property type="project" value="UniProtKB"/>
</dbReference>
<dbReference type="GO" id="GO:0035879">
    <property type="term" value="P:plasma membrane lactate transport"/>
    <property type="evidence" value="ECO:0000315"/>
    <property type="project" value="ARUK-UCL"/>
</dbReference>
<dbReference type="GO" id="GO:0042867">
    <property type="term" value="P:pyruvate catabolic process"/>
    <property type="evidence" value="ECO:0000315"/>
    <property type="project" value="MGI"/>
</dbReference>
<dbReference type="GO" id="GO:1901475">
    <property type="term" value="P:pyruvate transmembrane transport"/>
    <property type="evidence" value="ECO:0000250"/>
    <property type="project" value="UniProtKB"/>
</dbReference>
<dbReference type="GO" id="GO:0050796">
    <property type="term" value="P:regulation of insulin secretion"/>
    <property type="evidence" value="ECO:0000315"/>
    <property type="project" value="UniProtKB"/>
</dbReference>
<dbReference type="GO" id="GO:0032094">
    <property type="term" value="P:response to food"/>
    <property type="evidence" value="ECO:0000315"/>
    <property type="project" value="UniProtKB"/>
</dbReference>
<dbReference type="FunFam" id="1.20.1250.20:FF:000030">
    <property type="entry name" value="monocarboxylate transporter 1 isoform X1"/>
    <property type="match status" value="1"/>
</dbReference>
<dbReference type="Gene3D" id="1.20.1250.20">
    <property type="entry name" value="MFS general substrate transporter like domains"/>
    <property type="match status" value="1"/>
</dbReference>
<dbReference type="InterPro" id="IPR004743">
    <property type="entry name" value="MCT"/>
</dbReference>
<dbReference type="InterPro" id="IPR011701">
    <property type="entry name" value="MFS"/>
</dbReference>
<dbReference type="InterPro" id="IPR020846">
    <property type="entry name" value="MFS_dom"/>
</dbReference>
<dbReference type="InterPro" id="IPR036259">
    <property type="entry name" value="MFS_trans_sf"/>
</dbReference>
<dbReference type="InterPro" id="IPR050327">
    <property type="entry name" value="Proton-linked_MCT"/>
</dbReference>
<dbReference type="NCBIfam" id="TIGR00892">
    <property type="entry name" value="2A0113"/>
    <property type="match status" value="1"/>
</dbReference>
<dbReference type="PANTHER" id="PTHR11360">
    <property type="entry name" value="MONOCARBOXYLATE TRANSPORTER"/>
    <property type="match status" value="1"/>
</dbReference>
<dbReference type="PANTHER" id="PTHR11360:SF24">
    <property type="entry name" value="MONOCARBOXYLATE TRANSPORTER 1"/>
    <property type="match status" value="1"/>
</dbReference>
<dbReference type="Pfam" id="PF07690">
    <property type="entry name" value="MFS_1"/>
    <property type="match status" value="1"/>
</dbReference>
<dbReference type="SUPFAM" id="SSF103473">
    <property type="entry name" value="MFS general substrate transporter"/>
    <property type="match status" value="1"/>
</dbReference>
<dbReference type="PROSITE" id="PS50850">
    <property type="entry name" value="MFS"/>
    <property type="match status" value="1"/>
</dbReference>
<organism>
    <name type="scientific">Mus musculus</name>
    <name type="common">Mouse</name>
    <dbReference type="NCBI Taxonomy" id="10090"/>
    <lineage>
        <taxon>Eukaryota</taxon>
        <taxon>Metazoa</taxon>
        <taxon>Chordata</taxon>
        <taxon>Craniata</taxon>
        <taxon>Vertebrata</taxon>
        <taxon>Euteleostomi</taxon>
        <taxon>Mammalia</taxon>
        <taxon>Eutheria</taxon>
        <taxon>Euarchontoglires</taxon>
        <taxon>Glires</taxon>
        <taxon>Rodentia</taxon>
        <taxon>Myomorpha</taxon>
        <taxon>Muroidea</taxon>
        <taxon>Muridae</taxon>
        <taxon>Murinae</taxon>
        <taxon>Mus</taxon>
        <taxon>Mus</taxon>
    </lineage>
</organism>
<feature type="chain" id="PRO_0000211383" description="Monocarboxylate transporter 1">
    <location>
        <begin position="1"/>
        <end position="493"/>
    </location>
</feature>
<feature type="topological domain" description="Cytoplasmic" evidence="10">
    <location>
        <begin position="1"/>
        <end position="22"/>
    </location>
</feature>
<feature type="transmembrane region" description="Helical; Name=1" evidence="1">
    <location>
        <begin position="23"/>
        <end position="44"/>
    </location>
</feature>
<feature type="topological domain" description="Extracellular" evidence="10">
    <location>
        <begin position="45"/>
        <end position="55"/>
    </location>
</feature>
<feature type="transmembrane region" description="Helical; Name=2" evidence="1">
    <location>
        <begin position="56"/>
        <end position="80"/>
    </location>
</feature>
<feature type="topological domain" description="Cytoplasmic" evidence="10">
    <location>
        <begin position="81"/>
        <end position="84"/>
    </location>
</feature>
<feature type="transmembrane region" description="Helical; Name=3" evidence="1">
    <location>
        <begin position="85"/>
        <end position="105"/>
    </location>
</feature>
<feature type="topological domain" description="Extracellular" evidence="10">
    <location>
        <begin position="106"/>
        <end position="109"/>
    </location>
</feature>
<feature type="transmembrane region" description="Helical; Name=4" evidence="1">
    <location>
        <begin position="110"/>
        <end position="132"/>
    </location>
</feature>
<feature type="topological domain" description="Cytoplasmic" evidence="10">
    <location>
        <begin position="133"/>
        <end position="146"/>
    </location>
</feature>
<feature type="transmembrane region" description="Helical; Name=5" evidence="1">
    <location>
        <begin position="147"/>
        <end position="169"/>
    </location>
</feature>
<feature type="topological domain" description="Extracellular" evidence="10">
    <location>
        <begin position="170"/>
        <end position="174"/>
    </location>
</feature>
<feature type="transmembrane region" description="Helical; Name=6" evidence="1">
    <location>
        <begin position="175"/>
        <end position="194"/>
    </location>
</feature>
<feature type="topological domain" description="Cytoplasmic" evidence="10">
    <location>
        <begin position="195"/>
        <end position="254"/>
    </location>
</feature>
<feature type="transmembrane region" description="Helical; Name=7" evidence="1">
    <location>
        <begin position="255"/>
        <end position="281"/>
    </location>
</feature>
<feature type="topological domain" description="Extracellular" evidence="10">
    <location>
        <begin position="282"/>
        <end position="288"/>
    </location>
</feature>
<feature type="transmembrane region" description="Helical; Name=8" evidence="1">
    <location>
        <begin position="289"/>
        <end position="310"/>
    </location>
</feature>
<feature type="topological domain" description="Cytoplasmic" evidence="10">
    <location>
        <begin position="311"/>
        <end position="321"/>
    </location>
</feature>
<feature type="transmembrane region" description="Helical; Name=9" evidence="1">
    <location>
        <begin position="322"/>
        <end position="342"/>
    </location>
</feature>
<feature type="topological domain" description="Extracellular" evidence="10">
    <location>
        <begin position="343"/>
        <end position="346"/>
    </location>
</feature>
<feature type="transmembrane region" description="Helical; Name=10" evidence="1">
    <location>
        <begin position="347"/>
        <end position="368"/>
    </location>
</feature>
<feature type="topological domain" description="Cytoplasmic" evidence="10">
    <location>
        <begin position="369"/>
        <end position="382"/>
    </location>
</feature>
<feature type="transmembrane region" description="Helical; Name=11" evidence="1">
    <location>
        <begin position="383"/>
        <end position="403"/>
    </location>
</feature>
<feature type="topological domain" description="Extracellular" evidence="10">
    <location>
        <begin position="404"/>
        <end position="414"/>
    </location>
</feature>
<feature type="transmembrane region" description="Helical; Name=12" evidence="1">
    <location>
        <begin position="415"/>
        <end position="436"/>
    </location>
</feature>
<feature type="topological domain" description="Cytoplasmic" evidence="10">
    <location>
        <begin position="437"/>
        <end position="493"/>
    </location>
</feature>
<feature type="region of interest" description="Disordered" evidence="3">
    <location>
        <begin position="447"/>
        <end position="493"/>
    </location>
</feature>
<feature type="compositionally biased region" description="Basic and acidic residues" evidence="3">
    <location>
        <begin position="447"/>
        <end position="472"/>
    </location>
</feature>
<feature type="compositionally biased region" description="Polar residues" evidence="3">
    <location>
        <begin position="474"/>
        <end position="485"/>
    </location>
</feature>
<feature type="binding site" evidence="1">
    <location>
        <position position="38"/>
    </location>
    <ligand>
        <name>(S)-lactate</name>
        <dbReference type="ChEBI" id="CHEBI:16651"/>
    </ligand>
</feature>
<feature type="binding site" evidence="1">
    <location>
        <position position="302"/>
    </location>
    <ligand>
        <name>H(+)</name>
        <dbReference type="ChEBI" id="CHEBI:15378"/>
    </ligand>
</feature>
<feature type="binding site" evidence="1">
    <location>
        <position position="306"/>
    </location>
    <ligand>
        <name>(S)-lactate</name>
        <dbReference type="ChEBI" id="CHEBI:16651"/>
    </ligand>
</feature>
<feature type="modified residue" description="Phosphoserine" evidence="12 16">
    <location>
        <position position="210"/>
    </location>
</feature>
<feature type="modified residue" description="Phosphoserine" evidence="11 13 14 15 16">
    <location>
        <position position="213"/>
    </location>
</feature>
<feature type="modified residue" description="Phosphoserine" evidence="16">
    <location>
        <position position="220"/>
    </location>
</feature>
<feature type="modified residue" description="Phosphothreonine" evidence="12">
    <location>
        <position position="224"/>
    </location>
</feature>
<feature type="modified residue" description="Phosphoserine" evidence="15 16">
    <location>
        <position position="230"/>
    </location>
</feature>
<feature type="modified residue" description="Phosphoserine" evidence="15">
    <location>
        <position position="461"/>
    </location>
</feature>
<feature type="modified residue" description="Phosphothreonine" evidence="15">
    <location>
        <position position="462"/>
    </location>
</feature>
<feature type="modified residue" description="Phosphoserine" evidence="15 16">
    <location>
        <position position="477"/>
    </location>
</feature>
<feature type="modified residue" description="Phosphoserine" evidence="16">
    <location>
        <position position="482"/>
    </location>
</feature>
<feature type="modified residue" description="Phosphoserine" evidence="16">
    <location>
        <position position="483"/>
    </location>
</feature>
<feature type="modified residue" description="Phosphoserine" evidence="12 15 16">
    <location>
        <position position="491"/>
    </location>
</feature>